<sequence length="165" mass="18659">MPLLDSFKVDHTKMPAPAVRLAKTMQTPKGDTISVFDLRFTRPNCELLSEKGIHTMEHLIAGFMREHLNNTRVEIIDISPMGCRTGFYMSVVGAPNEYNVKEAWESSMRDVLRICDEKDIPELNIYQCGTAKMHSLKEAQDIAQVVLDKGVSVMNTQELLLKDFA</sequence>
<comment type="function">
    <text evidence="1">Involved in the synthesis of autoinducer 2 (AI-2) which is secreted by bacteria and is used to communicate both the cell density and the metabolic potential of the environment. The regulation of gene expression in response to changes in cell density is called quorum sensing. Catalyzes the transformation of S-ribosylhomocysteine (RHC) to homocysteine (HC) and 4,5-dihydroxy-2,3-pentadione (DPD).</text>
</comment>
<comment type="catalytic activity">
    <reaction evidence="1">
        <text>S-(5-deoxy-D-ribos-5-yl)-L-homocysteine = (S)-4,5-dihydroxypentane-2,3-dione + L-homocysteine</text>
        <dbReference type="Rhea" id="RHEA:17753"/>
        <dbReference type="ChEBI" id="CHEBI:29484"/>
        <dbReference type="ChEBI" id="CHEBI:58195"/>
        <dbReference type="ChEBI" id="CHEBI:58199"/>
        <dbReference type="EC" id="4.4.1.21"/>
    </reaction>
</comment>
<comment type="cofactor">
    <cofactor evidence="1">
        <name>Fe cation</name>
        <dbReference type="ChEBI" id="CHEBI:24875"/>
    </cofactor>
    <text evidence="1">Binds 1 Fe cation per subunit.</text>
</comment>
<comment type="subunit">
    <text evidence="1">Homodimer.</text>
</comment>
<comment type="similarity">
    <text evidence="1">Belongs to the LuxS family.</text>
</comment>
<accession>Q7VJR7</accession>
<keyword id="KW-0071">Autoinducer synthesis</keyword>
<keyword id="KW-0408">Iron</keyword>
<keyword id="KW-0456">Lyase</keyword>
<keyword id="KW-0479">Metal-binding</keyword>
<keyword id="KW-0673">Quorum sensing</keyword>
<keyword id="KW-1185">Reference proteome</keyword>
<name>LUXS_HELHP</name>
<dbReference type="EC" id="4.4.1.21" evidence="1"/>
<dbReference type="EMBL" id="AE017125">
    <property type="protein sequence ID" value="AAP76773.1"/>
    <property type="molecule type" value="Genomic_DNA"/>
</dbReference>
<dbReference type="RefSeq" id="WP_011115019.1">
    <property type="nucleotide sequence ID" value="NC_004917.1"/>
</dbReference>
<dbReference type="SMR" id="Q7VJR7"/>
<dbReference type="STRING" id="235279.HH_0176"/>
<dbReference type="KEGG" id="hhe:HH_0176"/>
<dbReference type="eggNOG" id="COG1854">
    <property type="taxonomic scope" value="Bacteria"/>
</dbReference>
<dbReference type="HOGENOM" id="CLU_107531_2_0_7"/>
<dbReference type="OrthoDB" id="9788129at2"/>
<dbReference type="Proteomes" id="UP000002495">
    <property type="component" value="Chromosome"/>
</dbReference>
<dbReference type="GO" id="GO:0005506">
    <property type="term" value="F:iron ion binding"/>
    <property type="evidence" value="ECO:0007669"/>
    <property type="project" value="InterPro"/>
</dbReference>
<dbReference type="GO" id="GO:0043768">
    <property type="term" value="F:S-ribosylhomocysteine lyase activity"/>
    <property type="evidence" value="ECO:0007669"/>
    <property type="project" value="UniProtKB-UniRule"/>
</dbReference>
<dbReference type="GO" id="GO:0009372">
    <property type="term" value="P:quorum sensing"/>
    <property type="evidence" value="ECO:0007669"/>
    <property type="project" value="UniProtKB-UniRule"/>
</dbReference>
<dbReference type="Gene3D" id="3.30.1360.80">
    <property type="entry name" value="S-ribosylhomocysteinase (LuxS)"/>
    <property type="match status" value="1"/>
</dbReference>
<dbReference type="HAMAP" id="MF_00091">
    <property type="entry name" value="LuxS"/>
    <property type="match status" value="1"/>
</dbReference>
<dbReference type="InterPro" id="IPR037005">
    <property type="entry name" value="LuxS_sf"/>
</dbReference>
<dbReference type="InterPro" id="IPR011249">
    <property type="entry name" value="Metalloenz_LuxS/M16"/>
</dbReference>
<dbReference type="InterPro" id="IPR003815">
    <property type="entry name" value="S-ribosylhomocysteinase"/>
</dbReference>
<dbReference type="NCBIfam" id="NF002602">
    <property type="entry name" value="PRK02260.1-2"/>
    <property type="match status" value="1"/>
</dbReference>
<dbReference type="PANTHER" id="PTHR35799">
    <property type="entry name" value="S-RIBOSYLHOMOCYSTEINE LYASE"/>
    <property type="match status" value="1"/>
</dbReference>
<dbReference type="PANTHER" id="PTHR35799:SF1">
    <property type="entry name" value="S-RIBOSYLHOMOCYSTEINE LYASE"/>
    <property type="match status" value="1"/>
</dbReference>
<dbReference type="Pfam" id="PF02664">
    <property type="entry name" value="LuxS"/>
    <property type="match status" value="1"/>
</dbReference>
<dbReference type="PIRSF" id="PIRSF006160">
    <property type="entry name" value="AI2"/>
    <property type="match status" value="1"/>
</dbReference>
<dbReference type="PRINTS" id="PR01487">
    <property type="entry name" value="LUXSPROTEIN"/>
</dbReference>
<dbReference type="SUPFAM" id="SSF63411">
    <property type="entry name" value="LuxS/MPP-like metallohydrolase"/>
    <property type="match status" value="1"/>
</dbReference>
<reference key="1">
    <citation type="journal article" date="2003" name="Proc. Natl. Acad. Sci. U.S.A.">
        <title>The complete genome sequence of the carcinogenic bacterium Helicobacter hepaticus.</title>
        <authorList>
            <person name="Suerbaum S."/>
            <person name="Josenhans C."/>
            <person name="Sterzenbach T."/>
            <person name="Drescher B."/>
            <person name="Brandt P."/>
            <person name="Bell M."/>
            <person name="Droege M."/>
            <person name="Fartmann B."/>
            <person name="Fischer H.-P."/>
            <person name="Ge Z."/>
            <person name="Hoerster A."/>
            <person name="Holland R."/>
            <person name="Klein K."/>
            <person name="Koenig J."/>
            <person name="Macko L."/>
            <person name="Mendz G.L."/>
            <person name="Nyakatura G."/>
            <person name="Schauer D.B."/>
            <person name="Shen Z."/>
            <person name="Weber J."/>
            <person name="Frosch M."/>
            <person name="Fox J.G."/>
        </authorList>
    </citation>
    <scope>NUCLEOTIDE SEQUENCE [LARGE SCALE GENOMIC DNA]</scope>
    <source>
        <strain>ATCC 51449 / 3B1</strain>
    </source>
</reference>
<evidence type="ECO:0000255" key="1">
    <source>
        <dbReference type="HAMAP-Rule" id="MF_00091"/>
    </source>
</evidence>
<organism>
    <name type="scientific">Helicobacter hepaticus (strain ATCC 51449 / 3B1)</name>
    <dbReference type="NCBI Taxonomy" id="235279"/>
    <lineage>
        <taxon>Bacteria</taxon>
        <taxon>Pseudomonadati</taxon>
        <taxon>Campylobacterota</taxon>
        <taxon>Epsilonproteobacteria</taxon>
        <taxon>Campylobacterales</taxon>
        <taxon>Helicobacteraceae</taxon>
        <taxon>Helicobacter</taxon>
    </lineage>
</organism>
<proteinExistence type="inferred from homology"/>
<gene>
    <name evidence="1" type="primary">luxS</name>
    <name type="ordered locus">HH_0176</name>
</gene>
<protein>
    <recommendedName>
        <fullName evidence="1">S-ribosylhomocysteine lyase</fullName>
        <ecNumber evidence="1">4.4.1.21</ecNumber>
    </recommendedName>
    <alternativeName>
        <fullName evidence="1">AI-2 synthesis protein</fullName>
    </alternativeName>
    <alternativeName>
        <fullName evidence="1">Autoinducer-2 production protein LuxS</fullName>
    </alternativeName>
</protein>
<feature type="chain" id="PRO_0000172228" description="S-ribosylhomocysteine lyase">
    <location>
        <begin position="1"/>
        <end position="165"/>
    </location>
</feature>
<feature type="binding site" evidence="1">
    <location>
        <position position="54"/>
    </location>
    <ligand>
        <name>Fe cation</name>
        <dbReference type="ChEBI" id="CHEBI:24875"/>
    </ligand>
</feature>
<feature type="binding site" evidence="1">
    <location>
        <position position="58"/>
    </location>
    <ligand>
        <name>Fe cation</name>
        <dbReference type="ChEBI" id="CHEBI:24875"/>
    </ligand>
</feature>
<feature type="binding site" evidence="1">
    <location>
        <position position="128"/>
    </location>
    <ligand>
        <name>Fe cation</name>
        <dbReference type="ChEBI" id="CHEBI:24875"/>
    </ligand>
</feature>